<keyword id="KW-0963">Cytoplasm</keyword>
<keyword id="KW-0648">Protein biosynthesis</keyword>
<comment type="function">
    <text evidence="1">Responsible for the release of ribosomes from messenger RNA at the termination of protein biosynthesis. May increase the efficiency of translation by recycling ribosomes from one round of translation to another.</text>
</comment>
<comment type="subcellular location">
    <subcellularLocation>
        <location evidence="1">Cytoplasm</location>
    </subcellularLocation>
</comment>
<comment type="similarity">
    <text evidence="1">Belongs to the RRF family.</text>
</comment>
<feature type="chain" id="PRO_1000003180" description="Ribosome-recycling factor">
    <location>
        <begin position="1"/>
        <end position="186"/>
    </location>
</feature>
<organism>
    <name type="scientific">Janthinobacterium sp. (strain Marseille)</name>
    <name type="common">Minibacterium massiliensis</name>
    <dbReference type="NCBI Taxonomy" id="375286"/>
    <lineage>
        <taxon>Bacteria</taxon>
        <taxon>Pseudomonadati</taxon>
        <taxon>Pseudomonadota</taxon>
        <taxon>Betaproteobacteria</taxon>
        <taxon>Burkholderiales</taxon>
        <taxon>Oxalobacteraceae</taxon>
        <taxon>Janthinobacterium</taxon>
    </lineage>
</organism>
<gene>
    <name evidence="1" type="primary">frr</name>
    <name type="ordered locus">mma_2055</name>
</gene>
<dbReference type="EMBL" id="CP000269">
    <property type="protein sequence ID" value="ABR89027.1"/>
    <property type="molecule type" value="Genomic_DNA"/>
</dbReference>
<dbReference type="RefSeq" id="WP_012079908.1">
    <property type="nucleotide sequence ID" value="NC_009659.1"/>
</dbReference>
<dbReference type="SMR" id="A6SZP8"/>
<dbReference type="STRING" id="375286.mma_2055"/>
<dbReference type="KEGG" id="mms:mma_2055"/>
<dbReference type="eggNOG" id="COG0233">
    <property type="taxonomic scope" value="Bacteria"/>
</dbReference>
<dbReference type="HOGENOM" id="CLU_073981_2_1_4"/>
<dbReference type="OrthoDB" id="9804006at2"/>
<dbReference type="Proteomes" id="UP000006388">
    <property type="component" value="Chromosome"/>
</dbReference>
<dbReference type="GO" id="GO:0005829">
    <property type="term" value="C:cytosol"/>
    <property type="evidence" value="ECO:0007669"/>
    <property type="project" value="GOC"/>
</dbReference>
<dbReference type="GO" id="GO:0043023">
    <property type="term" value="F:ribosomal large subunit binding"/>
    <property type="evidence" value="ECO:0007669"/>
    <property type="project" value="TreeGrafter"/>
</dbReference>
<dbReference type="GO" id="GO:0002184">
    <property type="term" value="P:cytoplasmic translational termination"/>
    <property type="evidence" value="ECO:0007669"/>
    <property type="project" value="TreeGrafter"/>
</dbReference>
<dbReference type="CDD" id="cd00520">
    <property type="entry name" value="RRF"/>
    <property type="match status" value="1"/>
</dbReference>
<dbReference type="FunFam" id="1.10.132.20:FF:000001">
    <property type="entry name" value="Ribosome-recycling factor"/>
    <property type="match status" value="1"/>
</dbReference>
<dbReference type="FunFam" id="3.30.1360.40:FF:000001">
    <property type="entry name" value="Ribosome-recycling factor"/>
    <property type="match status" value="1"/>
</dbReference>
<dbReference type="Gene3D" id="3.30.1360.40">
    <property type="match status" value="1"/>
</dbReference>
<dbReference type="Gene3D" id="1.10.132.20">
    <property type="entry name" value="Ribosome-recycling factor"/>
    <property type="match status" value="1"/>
</dbReference>
<dbReference type="HAMAP" id="MF_00040">
    <property type="entry name" value="RRF"/>
    <property type="match status" value="1"/>
</dbReference>
<dbReference type="InterPro" id="IPR002661">
    <property type="entry name" value="Ribosome_recyc_fac"/>
</dbReference>
<dbReference type="InterPro" id="IPR023584">
    <property type="entry name" value="Ribosome_recyc_fac_dom"/>
</dbReference>
<dbReference type="InterPro" id="IPR036191">
    <property type="entry name" value="RRF_sf"/>
</dbReference>
<dbReference type="NCBIfam" id="TIGR00496">
    <property type="entry name" value="frr"/>
    <property type="match status" value="1"/>
</dbReference>
<dbReference type="PANTHER" id="PTHR20982:SF3">
    <property type="entry name" value="MITOCHONDRIAL RIBOSOME RECYCLING FACTOR PSEUDO 1"/>
    <property type="match status" value="1"/>
</dbReference>
<dbReference type="PANTHER" id="PTHR20982">
    <property type="entry name" value="RIBOSOME RECYCLING FACTOR"/>
    <property type="match status" value="1"/>
</dbReference>
<dbReference type="Pfam" id="PF01765">
    <property type="entry name" value="RRF"/>
    <property type="match status" value="1"/>
</dbReference>
<dbReference type="SUPFAM" id="SSF55194">
    <property type="entry name" value="Ribosome recycling factor, RRF"/>
    <property type="match status" value="1"/>
</dbReference>
<name>RRF_JANMA</name>
<protein>
    <recommendedName>
        <fullName evidence="1">Ribosome-recycling factor</fullName>
        <shortName evidence="1">RRF</shortName>
    </recommendedName>
    <alternativeName>
        <fullName evidence="1">Ribosome-releasing factor</fullName>
    </alternativeName>
</protein>
<reference key="1">
    <citation type="journal article" date="2007" name="PLoS Genet.">
        <title>Genome analysis of Minibacterium massiliensis highlights the convergent evolution of water-living bacteria.</title>
        <authorList>
            <person name="Audic S."/>
            <person name="Robert C."/>
            <person name="Campagna B."/>
            <person name="Parinello H."/>
            <person name="Claverie J.-M."/>
            <person name="Raoult D."/>
            <person name="Drancourt M."/>
        </authorList>
    </citation>
    <scope>NUCLEOTIDE SEQUENCE [LARGE SCALE GENOMIC DNA]</scope>
    <source>
        <strain>Marseille</strain>
    </source>
</reference>
<proteinExistence type="inferred from homology"/>
<sequence>MTVADAKKTADQKMQKSIETLKADLAKVRTGRAHTGILDHVMVEYYGNPTNLSQVANVTLIDARTIGVQPFEKKMVAVVEKAIREADLGLNPATQGELIRVPTPPLTEERRKEMVKLVKSEAEDAKIAVRNIRRDANESLKKLVKEKACSEDEERRAQDEIQKLTDKFVIEIDKLVVEKEKEVLTV</sequence>
<accession>A6SZP8</accession>
<evidence type="ECO:0000255" key="1">
    <source>
        <dbReference type="HAMAP-Rule" id="MF_00040"/>
    </source>
</evidence>